<proteinExistence type="inferred from homology"/>
<gene>
    <name evidence="1" type="primary">thiE</name>
    <name type="ordered locus">PLES_09991</name>
</gene>
<organism>
    <name type="scientific">Pseudomonas aeruginosa (strain LESB58)</name>
    <dbReference type="NCBI Taxonomy" id="557722"/>
    <lineage>
        <taxon>Bacteria</taxon>
        <taxon>Pseudomonadati</taxon>
        <taxon>Pseudomonadota</taxon>
        <taxon>Gammaproteobacteria</taxon>
        <taxon>Pseudomonadales</taxon>
        <taxon>Pseudomonadaceae</taxon>
        <taxon>Pseudomonas</taxon>
    </lineage>
</organism>
<dbReference type="EC" id="2.5.1.3" evidence="1"/>
<dbReference type="EMBL" id="FM209186">
    <property type="protein sequence ID" value="CAW25726.1"/>
    <property type="molecule type" value="Genomic_DNA"/>
</dbReference>
<dbReference type="RefSeq" id="WP_012613618.1">
    <property type="nucleotide sequence ID" value="NC_011770.1"/>
</dbReference>
<dbReference type="SMR" id="B7V9E0"/>
<dbReference type="KEGG" id="pag:PLES_09991"/>
<dbReference type="HOGENOM" id="CLU_018272_3_1_6"/>
<dbReference type="UniPathway" id="UPA00060">
    <property type="reaction ID" value="UER00141"/>
</dbReference>
<dbReference type="GO" id="GO:0005737">
    <property type="term" value="C:cytoplasm"/>
    <property type="evidence" value="ECO:0007669"/>
    <property type="project" value="TreeGrafter"/>
</dbReference>
<dbReference type="GO" id="GO:0000287">
    <property type="term" value="F:magnesium ion binding"/>
    <property type="evidence" value="ECO:0007669"/>
    <property type="project" value="UniProtKB-UniRule"/>
</dbReference>
<dbReference type="GO" id="GO:0004789">
    <property type="term" value="F:thiamine-phosphate diphosphorylase activity"/>
    <property type="evidence" value="ECO:0007669"/>
    <property type="project" value="UniProtKB-UniRule"/>
</dbReference>
<dbReference type="GO" id="GO:0009228">
    <property type="term" value="P:thiamine biosynthetic process"/>
    <property type="evidence" value="ECO:0007669"/>
    <property type="project" value="UniProtKB-KW"/>
</dbReference>
<dbReference type="GO" id="GO:0009229">
    <property type="term" value="P:thiamine diphosphate biosynthetic process"/>
    <property type="evidence" value="ECO:0007669"/>
    <property type="project" value="UniProtKB-UniRule"/>
</dbReference>
<dbReference type="CDD" id="cd00564">
    <property type="entry name" value="TMP_TenI"/>
    <property type="match status" value="1"/>
</dbReference>
<dbReference type="FunFam" id="3.20.20.70:FF:000276">
    <property type="entry name" value="Thiamine-phosphate synthase"/>
    <property type="match status" value="1"/>
</dbReference>
<dbReference type="Gene3D" id="3.20.20.70">
    <property type="entry name" value="Aldolase class I"/>
    <property type="match status" value="1"/>
</dbReference>
<dbReference type="HAMAP" id="MF_00097">
    <property type="entry name" value="TMP_synthase"/>
    <property type="match status" value="1"/>
</dbReference>
<dbReference type="InterPro" id="IPR013785">
    <property type="entry name" value="Aldolase_TIM"/>
</dbReference>
<dbReference type="InterPro" id="IPR036206">
    <property type="entry name" value="ThiamineP_synth_sf"/>
</dbReference>
<dbReference type="InterPro" id="IPR022998">
    <property type="entry name" value="ThiamineP_synth_TenI"/>
</dbReference>
<dbReference type="InterPro" id="IPR034291">
    <property type="entry name" value="TMP_synthase"/>
</dbReference>
<dbReference type="NCBIfam" id="TIGR00693">
    <property type="entry name" value="thiE"/>
    <property type="match status" value="1"/>
</dbReference>
<dbReference type="PANTHER" id="PTHR20857">
    <property type="entry name" value="THIAMINE-PHOSPHATE PYROPHOSPHORYLASE"/>
    <property type="match status" value="1"/>
</dbReference>
<dbReference type="PANTHER" id="PTHR20857:SF15">
    <property type="entry name" value="THIAMINE-PHOSPHATE SYNTHASE"/>
    <property type="match status" value="1"/>
</dbReference>
<dbReference type="Pfam" id="PF02581">
    <property type="entry name" value="TMP-TENI"/>
    <property type="match status" value="1"/>
</dbReference>
<dbReference type="SUPFAM" id="SSF51391">
    <property type="entry name" value="Thiamin phosphate synthase"/>
    <property type="match status" value="1"/>
</dbReference>
<accession>B7V9E0</accession>
<reference key="1">
    <citation type="journal article" date="2009" name="Genome Res.">
        <title>Newly introduced genomic prophage islands are critical determinants of in vivo competitiveness in the Liverpool epidemic strain of Pseudomonas aeruginosa.</title>
        <authorList>
            <person name="Winstanley C."/>
            <person name="Langille M.G.I."/>
            <person name="Fothergill J.L."/>
            <person name="Kukavica-Ibrulj I."/>
            <person name="Paradis-Bleau C."/>
            <person name="Sanschagrin F."/>
            <person name="Thomson N.R."/>
            <person name="Winsor G.L."/>
            <person name="Quail M.A."/>
            <person name="Lennard N."/>
            <person name="Bignell A."/>
            <person name="Clarke L."/>
            <person name="Seeger K."/>
            <person name="Saunders D."/>
            <person name="Harris D."/>
            <person name="Parkhill J."/>
            <person name="Hancock R.E.W."/>
            <person name="Brinkman F.S.L."/>
            <person name="Levesque R.C."/>
        </authorList>
    </citation>
    <scope>NUCLEOTIDE SEQUENCE [LARGE SCALE GENOMIC DNA]</scope>
    <source>
        <strain>LESB58</strain>
    </source>
</reference>
<feature type="chain" id="PRO_1000117301" description="Thiamine-phosphate synthase">
    <location>
        <begin position="1"/>
        <end position="209"/>
    </location>
</feature>
<feature type="binding site" evidence="1">
    <location>
        <begin position="36"/>
        <end position="40"/>
    </location>
    <ligand>
        <name>4-amino-2-methyl-5-(diphosphooxymethyl)pyrimidine</name>
        <dbReference type="ChEBI" id="CHEBI:57841"/>
    </ligand>
</feature>
<feature type="binding site" evidence="1">
    <location>
        <position position="68"/>
    </location>
    <ligand>
        <name>4-amino-2-methyl-5-(diphosphooxymethyl)pyrimidine</name>
        <dbReference type="ChEBI" id="CHEBI:57841"/>
    </ligand>
</feature>
<feature type="binding site" evidence="1">
    <location>
        <position position="69"/>
    </location>
    <ligand>
        <name>Mg(2+)</name>
        <dbReference type="ChEBI" id="CHEBI:18420"/>
    </ligand>
</feature>
<feature type="binding site" evidence="1">
    <location>
        <position position="87"/>
    </location>
    <ligand>
        <name>Mg(2+)</name>
        <dbReference type="ChEBI" id="CHEBI:18420"/>
    </ligand>
</feature>
<feature type="binding site" evidence="1">
    <location>
        <position position="106"/>
    </location>
    <ligand>
        <name>4-amino-2-methyl-5-(diphosphooxymethyl)pyrimidine</name>
        <dbReference type="ChEBI" id="CHEBI:57841"/>
    </ligand>
</feature>
<feature type="binding site" evidence="1">
    <location>
        <begin position="133"/>
        <end position="135"/>
    </location>
    <ligand>
        <name>2-[(2R,5Z)-2-carboxy-4-methylthiazol-5(2H)-ylidene]ethyl phosphate</name>
        <dbReference type="ChEBI" id="CHEBI:62899"/>
    </ligand>
</feature>
<feature type="binding site" evidence="1">
    <location>
        <position position="136"/>
    </location>
    <ligand>
        <name>4-amino-2-methyl-5-(diphosphooxymethyl)pyrimidine</name>
        <dbReference type="ChEBI" id="CHEBI:57841"/>
    </ligand>
</feature>
<feature type="binding site" evidence="1">
    <location>
        <position position="163"/>
    </location>
    <ligand>
        <name>2-[(2R,5Z)-2-carboxy-4-methylthiazol-5(2H)-ylidene]ethyl phosphate</name>
        <dbReference type="ChEBI" id="CHEBI:62899"/>
    </ligand>
</feature>
<protein>
    <recommendedName>
        <fullName evidence="1">Thiamine-phosphate synthase</fullName>
        <shortName evidence="1">TP synthase</shortName>
        <shortName evidence="1">TPS</shortName>
        <ecNumber evidence="1">2.5.1.3</ecNumber>
    </recommendedName>
    <alternativeName>
        <fullName evidence="1">Thiamine-phosphate pyrophosphorylase</fullName>
        <shortName evidence="1">TMP pyrophosphorylase</shortName>
        <shortName evidence="1">TMP-PPase</shortName>
    </alternativeName>
</protein>
<evidence type="ECO:0000255" key="1">
    <source>
        <dbReference type="HAMAP-Rule" id="MF_00097"/>
    </source>
</evidence>
<keyword id="KW-0460">Magnesium</keyword>
<keyword id="KW-0479">Metal-binding</keyword>
<keyword id="KW-0784">Thiamine biosynthesis</keyword>
<keyword id="KW-0808">Transferase</keyword>
<name>THIE_PSEA8</name>
<comment type="function">
    <text evidence="1">Condenses 4-methyl-5-(beta-hydroxyethyl)thiazole monophosphate (THZ-P) and 2-methyl-4-amino-5-hydroxymethyl pyrimidine pyrophosphate (HMP-PP) to form thiamine monophosphate (TMP).</text>
</comment>
<comment type="catalytic activity">
    <reaction evidence="1">
        <text>2-[(2R,5Z)-2-carboxy-4-methylthiazol-5(2H)-ylidene]ethyl phosphate + 4-amino-2-methyl-5-(diphosphooxymethyl)pyrimidine + 2 H(+) = thiamine phosphate + CO2 + diphosphate</text>
        <dbReference type="Rhea" id="RHEA:47844"/>
        <dbReference type="ChEBI" id="CHEBI:15378"/>
        <dbReference type="ChEBI" id="CHEBI:16526"/>
        <dbReference type="ChEBI" id="CHEBI:33019"/>
        <dbReference type="ChEBI" id="CHEBI:37575"/>
        <dbReference type="ChEBI" id="CHEBI:57841"/>
        <dbReference type="ChEBI" id="CHEBI:62899"/>
        <dbReference type="EC" id="2.5.1.3"/>
    </reaction>
</comment>
<comment type="catalytic activity">
    <reaction evidence="1">
        <text>2-(2-carboxy-4-methylthiazol-5-yl)ethyl phosphate + 4-amino-2-methyl-5-(diphosphooxymethyl)pyrimidine + 2 H(+) = thiamine phosphate + CO2 + diphosphate</text>
        <dbReference type="Rhea" id="RHEA:47848"/>
        <dbReference type="ChEBI" id="CHEBI:15378"/>
        <dbReference type="ChEBI" id="CHEBI:16526"/>
        <dbReference type="ChEBI" id="CHEBI:33019"/>
        <dbReference type="ChEBI" id="CHEBI:37575"/>
        <dbReference type="ChEBI" id="CHEBI:57841"/>
        <dbReference type="ChEBI" id="CHEBI:62890"/>
        <dbReference type="EC" id="2.5.1.3"/>
    </reaction>
</comment>
<comment type="catalytic activity">
    <reaction evidence="1">
        <text>4-methyl-5-(2-phosphooxyethyl)-thiazole + 4-amino-2-methyl-5-(diphosphooxymethyl)pyrimidine + H(+) = thiamine phosphate + diphosphate</text>
        <dbReference type="Rhea" id="RHEA:22328"/>
        <dbReference type="ChEBI" id="CHEBI:15378"/>
        <dbReference type="ChEBI" id="CHEBI:33019"/>
        <dbReference type="ChEBI" id="CHEBI:37575"/>
        <dbReference type="ChEBI" id="CHEBI:57841"/>
        <dbReference type="ChEBI" id="CHEBI:58296"/>
        <dbReference type="EC" id="2.5.1.3"/>
    </reaction>
</comment>
<comment type="cofactor">
    <cofactor evidence="1">
        <name>Mg(2+)</name>
        <dbReference type="ChEBI" id="CHEBI:18420"/>
    </cofactor>
    <text evidence="1">Binds 1 Mg(2+) ion per subunit.</text>
</comment>
<comment type="pathway">
    <text evidence="1">Cofactor biosynthesis; thiamine diphosphate biosynthesis; thiamine phosphate from 4-amino-2-methyl-5-diphosphomethylpyrimidine and 4-methyl-5-(2-phosphoethyl)-thiazole: step 1/1.</text>
</comment>
<comment type="similarity">
    <text evidence="1">Belongs to the thiamine-phosphate synthase family.</text>
</comment>
<sequence length="209" mass="22132">MKLRGLYAITDSQLLDDGRLLPYVEAALRGGARLLQYRDKSSDQARRLREAESLRELCERYGAQLIVNDDAELAARLGVGLHLGQTDGSLSAARALLGRQAIIGATCHAQLELAEQAVAEGASYVAFGRFFNSSTKPGAPAASVELLDQARPRLPLPITAIGGISLDTAPGLIARGVDLVAVIHALFAAASAAEVERRARAFSALFEPA</sequence>